<organism>
    <name type="scientific">Cicer arietinum</name>
    <name type="common">Chickpea</name>
    <name type="synonym">Garbanzo</name>
    <dbReference type="NCBI Taxonomy" id="3827"/>
    <lineage>
        <taxon>Eukaryota</taxon>
        <taxon>Viridiplantae</taxon>
        <taxon>Streptophyta</taxon>
        <taxon>Embryophyta</taxon>
        <taxon>Tracheophyta</taxon>
        <taxon>Spermatophyta</taxon>
        <taxon>Magnoliopsida</taxon>
        <taxon>eudicotyledons</taxon>
        <taxon>Gunneridae</taxon>
        <taxon>Pentapetalae</taxon>
        <taxon>rosids</taxon>
        <taxon>fabids</taxon>
        <taxon>Fabales</taxon>
        <taxon>Fabaceae</taxon>
        <taxon>Papilionoideae</taxon>
        <taxon>50 kb inversion clade</taxon>
        <taxon>NPAAA clade</taxon>
        <taxon>Hologalegina</taxon>
        <taxon>IRL clade</taxon>
        <taxon>Cicereae</taxon>
        <taxon>Cicer</taxon>
    </lineage>
</organism>
<protein>
    <recommendedName>
        <fullName>Trans-cinnamate 4-monooxygenase</fullName>
        <ecNumber evidence="1">1.14.14.91</ecNumber>
    </recommendedName>
    <alternativeName>
        <fullName>Cinnamic acid 4-hydroxylase</fullName>
        <shortName>C4H</shortName>
        <shortName>CA4H</shortName>
    </alternativeName>
    <alternativeName>
        <fullName>Cytochrome P450 73</fullName>
    </alternativeName>
    <alternativeName>
        <fullName>Cytochrome P450C4H</fullName>
    </alternativeName>
</protein>
<reference key="1">
    <citation type="journal article" date="2000" name="Plant Sci.">
        <title>Cloning and characterization of eight cytochrome P450 cDNAs from chickpea (Cicer arietinum L.) cell suspension cultures.</title>
        <authorList>
            <person name="Overkamp S."/>
            <person name="Hein F."/>
            <person name="Barz W."/>
        </authorList>
    </citation>
    <scope>NUCLEOTIDE SEQUENCE [MRNA]</scope>
    <scope>FUNCTION</scope>
    <scope>INDUCTION</scope>
    <scope>DEVELOPMENTAL STAGE</scope>
    <source>
        <strain>cv. ILC 3279</strain>
    </source>
</reference>
<reference key="2">
    <citation type="online journal article" date="1999" name="Plant Gene Register">
        <title>Isolation of a full length cDNA encoding trans-cinnamate 4-hydroxylase from chickpea (Cicer arietinum L.).</title>
        <authorList>
            <person name="Overkamp S."/>
            <person name="Barz W."/>
        </authorList>
        <locator>PGR99-086</locator>
    </citation>
    <scope>NUCLEOTIDE SEQUENCE [MRNA]</scope>
    <source>
        <strain>cv. ILC 3279</strain>
    </source>
</reference>
<sequence>MDLLLLEKTLLALFIAATIAITISKLRGKRFKLPPGPIPVPVFGNWLQVGDDLNHRNLTDLAKRFGDIFLLRMGQRNLVVVSSPELAKEVLHTQGVEFGSRTRNVVFDIFTGKGQDMVFTVYGTLAEMRRIMTVPFFTNKVVQQYRFGWEFEAQSVVDDVKKNPEACSSGIVLRRRLQLMMYNIMYRIMFDRRFESEEDPLFVKLKALNGERSRLAQSFEYNYGDFIPILRPFLKGYLKLCKEVKDRRLQLFKDYFVDERKKLGSTKSTTNEGLKCAIDHILDAQQKGEINDDNVLYIVENINVAAIETTLWSIEWGIAELVNHQKIQNKVREEIDRVLGPGHQVTEPDLQKLPYLQAVIKETLRLRMAIPLLVPHMNLHDAKLSGFDIPAESKILVNAWWLANNPAQWKKPEEFRPERFLEEESHVEANGNDFRYLPFGVGRRSCPGIILALPILGITLGRLVQNFELLPPPGQSKIDTAEKGGQFSLHILKHSTIVCKPRSFN</sequence>
<accession>O81928</accession>
<feature type="chain" id="PRO_0000052244" description="Trans-cinnamate 4-monooxygenase">
    <location>
        <begin position="1"/>
        <end position="505"/>
    </location>
</feature>
<feature type="transmembrane region" description="Helical" evidence="3">
    <location>
        <begin position="3"/>
        <end position="23"/>
    </location>
</feature>
<feature type="binding site" evidence="2">
    <location>
        <begin position="212"/>
        <end position="217"/>
    </location>
    <ligand>
        <name>(E)-cinnamate</name>
        <dbReference type="ChEBI" id="CHEBI:15669"/>
    </ligand>
</feature>
<feature type="binding site" evidence="2">
    <location>
        <position position="305"/>
    </location>
    <ligand>
        <name>(E)-cinnamate</name>
        <dbReference type="ChEBI" id="CHEBI:15669"/>
    </ligand>
</feature>
<feature type="binding site" description="axial binding residue" evidence="2">
    <location>
        <position position="446"/>
    </location>
    <ligand>
        <name>heme</name>
        <dbReference type="ChEBI" id="CHEBI:30413"/>
    </ligand>
    <ligandPart>
        <name>Fe</name>
        <dbReference type="ChEBI" id="CHEBI:18248"/>
    </ligandPart>
</feature>
<name>TCMO_CICAR</name>
<gene>
    <name type="primary">CYP73A19</name>
    <name type="synonym">CYP73</name>
</gene>
<evidence type="ECO:0000250" key="1">
    <source>
        <dbReference type="UniProtKB" id="Q04468"/>
    </source>
</evidence>
<evidence type="ECO:0000250" key="2">
    <source>
        <dbReference type="UniProtKB" id="Q94IP1"/>
    </source>
</evidence>
<evidence type="ECO:0000255" key="3"/>
<evidence type="ECO:0000269" key="4">
    <source>
    </source>
</evidence>
<evidence type="ECO:0000305" key="5"/>
<comment type="function">
    <text evidence="1">Catalyzes the first oxidative step of the phenylpropanoid pathway in higher plants by transforming trans-cinnamate into p-coumarate (By similarity). The compounds formed by this pathway are essential components for lignification, pollination, and defense against ultraviolet light, predators and pathogens (By similarity).</text>
</comment>
<comment type="catalytic activity">
    <reaction evidence="1">
        <text>(E)-cinnamate + reduced [NADPH--hemoprotein reductase] + O2 = (E)-4-coumarate + oxidized [NADPH--hemoprotein reductase] + H2O + H(+)</text>
        <dbReference type="Rhea" id="RHEA:10608"/>
        <dbReference type="Rhea" id="RHEA-COMP:11964"/>
        <dbReference type="Rhea" id="RHEA-COMP:11965"/>
        <dbReference type="ChEBI" id="CHEBI:12876"/>
        <dbReference type="ChEBI" id="CHEBI:15377"/>
        <dbReference type="ChEBI" id="CHEBI:15378"/>
        <dbReference type="ChEBI" id="CHEBI:15379"/>
        <dbReference type="ChEBI" id="CHEBI:15669"/>
        <dbReference type="ChEBI" id="CHEBI:57618"/>
        <dbReference type="ChEBI" id="CHEBI:58210"/>
        <dbReference type="EC" id="1.14.14.91"/>
    </reaction>
</comment>
<comment type="cofactor">
    <cofactor evidence="2">
        <name>heme</name>
        <dbReference type="ChEBI" id="CHEBI:30413"/>
    </cofactor>
</comment>
<comment type="pathway">
    <text evidence="5">Phenylpropanoid metabolism; trans-4-coumarate biosynthesis; trans-4-coumarate from trans-cinnamate: step 1/1.</text>
</comment>
<comment type="subcellular location">
    <subcellularLocation>
        <location evidence="3">Membrane</location>
        <topology evidence="3">Single-pass membrane protein</topology>
    </subcellularLocation>
</comment>
<comment type="developmental stage">
    <text evidence="4">Detectable 2 hours after elicitation and disappears after 6 hours.</text>
</comment>
<comment type="induction">
    <text evidence="4">By elicitation.</text>
</comment>
<comment type="similarity">
    <text evidence="5">Belongs to the cytochrome P450 family.</text>
</comment>
<keyword id="KW-0349">Heme</keyword>
<keyword id="KW-0408">Iron</keyword>
<keyword id="KW-0472">Membrane</keyword>
<keyword id="KW-0479">Metal-binding</keyword>
<keyword id="KW-0503">Monooxygenase</keyword>
<keyword id="KW-0560">Oxidoreductase</keyword>
<keyword id="KW-1185">Reference proteome</keyword>
<keyword id="KW-0812">Transmembrane</keyword>
<keyword id="KW-1133">Transmembrane helix</keyword>
<dbReference type="EC" id="1.14.14.91" evidence="1"/>
<dbReference type="EMBL" id="AJ007449">
    <property type="protein sequence ID" value="CAA07519.2"/>
    <property type="molecule type" value="mRNA"/>
</dbReference>
<dbReference type="PIR" id="T09525">
    <property type="entry name" value="T09525"/>
</dbReference>
<dbReference type="RefSeq" id="NP_001266151.1">
    <property type="nucleotide sequence ID" value="NM_001279222.1"/>
</dbReference>
<dbReference type="SMR" id="O81928"/>
<dbReference type="STRING" id="3827.O81928"/>
<dbReference type="PaxDb" id="3827-XP_004490717.1"/>
<dbReference type="GeneID" id="101492721"/>
<dbReference type="KEGG" id="cam:101492721"/>
<dbReference type="eggNOG" id="KOG0156">
    <property type="taxonomic scope" value="Eukaryota"/>
</dbReference>
<dbReference type="OrthoDB" id="1470350at2759"/>
<dbReference type="UniPathway" id="UPA00825">
    <property type="reaction ID" value="UER00789"/>
</dbReference>
<dbReference type="Proteomes" id="UP000087171">
    <property type="component" value="Chromosome Ca2"/>
</dbReference>
<dbReference type="GO" id="GO:0016020">
    <property type="term" value="C:membrane"/>
    <property type="evidence" value="ECO:0007669"/>
    <property type="project" value="UniProtKB-SubCell"/>
</dbReference>
<dbReference type="GO" id="GO:0020037">
    <property type="term" value="F:heme binding"/>
    <property type="evidence" value="ECO:0007669"/>
    <property type="project" value="InterPro"/>
</dbReference>
<dbReference type="GO" id="GO:0005506">
    <property type="term" value="F:iron ion binding"/>
    <property type="evidence" value="ECO:0007669"/>
    <property type="project" value="InterPro"/>
</dbReference>
<dbReference type="GO" id="GO:0016710">
    <property type="term" value="F:trans-cinnamate 4-monooxygenase activity"/>
    <property type="evidence" value="ECO:0007669"/>
    <property type="project" value="UniProtKB-EC"/>
</dbReference>
<dbReference type="GO" id="GO:0009808">
    <property type="term" value="P:lignin metabolic process"/>
    <property type="evidence" value="ECO:0007669"/>
    <property type="project" value="TreeGrafter"/>
</dbReference>
<dbReference type="CDD" id="cd11074">
    <property type="entry name" value="CYP73"/>
    <property type="match status" value="1"/>
</dbReference>
<dbReference type="FunFam" id="1.10.630.10:FF:000013">
    <property type="entry name" value="Trans-cinnamate 4-monooxygenase"/>
    <property type="match status" value="1"/>
</dbReference>
<dbReference type="Gene3D" id="1.10.630.10">
    <property type="entry name" value="Cytochrome P450"/>
    <property type="match status" value="1"/>
</dbReference>
<dbReference type="InterPro" id="IPR001128">
    <property type="entry name" value="Cyt_P450"/>
</dbReference>
<dbReference type="InterPro" id="IPR017972">
    <property type="entry name" value="Cyt_P450_CS"/>
</dbReference>
<dbReference type="InterPro" id="IPR002401">
    <property type="entry name" value="Cyt_P450_E_grp-I"/>
</dbReference>
<dbReference type="InterPro" id="IPR036396">
    <property type="entry name" value="Cyt_P450_sf"/>
</dbReference>
<dbReference type="PANTHER" id="PTHR47948">
    <property type="entry name" value="TRANS-CINNAMATE 4-MONOOXYGENASE"/>
    <property type="match status" value="1"/>
</dbReference>
<dbReference type="PANTHER" id="PTHR47948:SF4">
    <property type="entry name" value="TRANS-CINNAMATE 4-MONOOXYGENASE"/>
    <property type="match status" value="1"/>
</dbReference>
<dbReference type="Pfam" id="PF00067">
    <property type="entry name" value="p450"/>
    <property type="match status" value="1"/>
</dbReference>
<dbReference type="PRINTS" id="PR00463">
    <property type="entry name" value="EP450I"/>
</dbReference>
<dbReference type="PRINTS" id="PR00385">
    <property type="entry name" value="P450"/>
</dbReference>
<dbReference type="SUPFAM" id="SSF48264">
    <property type="entry name" value="Cytochrome P450"/>
    <property type="match status" value="1"/>
</dbReference>
<dbReference type="PROSITE" id="PS00086">
    <property type="entry name" value="CYTOCHROME_P450"/>
    <property type="match status" value="1"/>
</dbReference>
<proteinExistence type="evidence at transcript level"/>